<proteinExistence type="evidence at protein level"/>
<protein>
    <recommendedName>
        <fullName>Transcriptional repressor SmtB homolog</fullName>
    </recommendedName>
</protein>
<feature type="chain" id="PRO_0000160627" description="Transcriptional repressor SmtB homolog">
    <location>
        <begin position="1"/>
        <end position="132"/>
    </location>
</feature>
<feature type="domain" description="HTH arsR-type" evidence="2">
    <location>
        <begin position="38"/>
        <end position="132"/>
    </location>
</feature>
<feature type="DNA-binding region" description="H-T-H motif" evidence="2">
    <location>
        <begin position="72"/>
        <end position="91"/>
    </location>
</feature>
<feature type="binding site" evidence="2">
    <location>
        <position position="20"/>
    </location>
    <ligand>
        <name>Zn(2+)</name>
        <dbReference type="ChEBI" id="CHEBI:29105"/>
    </ligand>
</feature>
<feature type="binding site" evidence="2">
    <location>
        <position position="26"/>
    </location>
    <ligand>
        <name>Zn(2+)</name>
        <dbReference type="ChEBI" id="CHEBI:29105"/>
    </ligand>
</feature>
<feature type="binding site" evidence="2">
    <location>
        <position position="71"/>
    </location>
    <ligand>
        <name>Zn(2+)</name>
        <dbReference type="ChEBI" id="CHEBI:29105"/>
    </ligand>
</feature>
<feature type="binding site" evidence="2">
    <location>
        <position position="73"/>
    </location>
    <ligand>
        <name>Zn(2+)</name>
        <dbReference type="ChEBI" id="CHEBI:29105"/>
    </ligand>
</feature>
<feature type="binding site" evidence="2">
    <location>
        <position position="114"/>
    </location>
    <ligand>
        <name>Zn(2+)</name>
        <dbReference type="ChEBI" id="CHEBI:29105"/>
    </ligand>
</feature>
<feature type="binding site" evidence="2">
    <location>
        <position position="116"/>
    </location>
    <ligand>
        <name>Zn(2+)</name>
        <dbReference type="ChEBI" id="CHEBI:29105"/>
    </ligand>
</feature>
<feature type="binding site" evidence="2">
    <location>
        <position position="127"/>
    </location>
    <ligand>
        <name>Zn(2+)</name>
        <dbReference type="ChEBI" id="CHEBI:29105"/>
    </ligand>
</feature>
<feature type="binding site" evidence="2">
    <location>
        <position position="130"/>
    </location>
    <ligand>
        <name>Zn(2+)</name>
        <dbReference type="ChEBI" id="CHEBI:29105"/>
    </ligand>
</feature>
<feature type="mutagenesis site" description="Loss of ability to respond to zinc. Still capable of binding DNA; when associated with S-73." evidence="3">
    <original>C</original>
    <variation>S</variation>
    <location>
        <position position="71"/>
    </location>
</feature>
<feature type="mutagenesis site" description="Loss of ability to respond to zinc. Still capable of binding DNA; when associated with S-71." evidence="3">
    <original>C</original>
    <variation>S</variation>
    <location>
        <position position="73"/>
    </location>
</feature>
<feature type="mutagenesis site" description="Loss of ability to respond to zinc. Still capable of binding DNA." evidence="3">
    <original>H</original>
    <variation>R</variation>
    <location>
        <position position="116"/>
    </location>
</feature>
<sequence length="132" mass="15083">MSKSSLSKSQSCQNEEMPLCDQPLVHLEQVRQVQPEVMSLDQAQQMAEFFSALADPSRLRLMSALARQELCVCDLAAAMKVSESAVSHQLRILRSQRLVKYRRVGRNVYYSLADNHVMNLYREVADHLQESD</sequence>
<evidence type="ECO:0000250" key="1"/>
<evidence type="ECO:0000255" key="2">
    <source>
        <dbReference type="PROSITE-ProRule" id="PRU00340"/>
    </source>
</evidence>
<evidence type="ECO:0000269" key="3">
    <source>
    </source>
</evidence>
<accession>Q55940</accession>
<name>ZIAR_SYNY3</name>
<reference key="1">
    <citation type="journal article" date="1995" name="DNA Res.">
        <title>Sequence analysis of the genome of the unicellular cyanobacterium Synechocystis sp. strain PCC6803. I. Sequence features in the 1 Mb region from map positions 64% to 92% of the genome.</title>
        <authorList>
            <person name="Kaneko T."/>
            <person name="Tanaka A."/>
            <person name="Sato S."/>
            <person name="Kotani H."/>
            <person name="Sazuka T."/>
            <person name="Miyajima N."/>
            <person name="Sugiura M."/>
            <person name="Tabata S."/>
        </authorList>
    </citation>
    <scope>NUCLEOTIDE SEQUENCE [LARGE SCALE GENOMIC DNA]</scope>
    <source>
        <strain>ATCC 27184 / PCC 6803 / N-1</strain>
    </source>
</reference>
<reference key="2">
    <citation type="journal article" date="1996" name="DNA Res.">
        <title>Sequence analysis of the genome of the unicellular cyanobacterium Synechocystis sp. strain PCC6803. II. Sequence determination of the entire genome and assignment of potential protein-coding regions.</title>
        <authorList>
            <person name="Kaneko T."/>
            <person name="Sato S."/>
            <person name="Kotani H."/>
            <person name="Tanaka A."/>
            <person name="Asamizu E."/>
            <person name="Nakamura Y."/>
            <person name="Miyajima N."/>
            <person name="Hirosawa M."/>
            <person name="Sugiura M."/>
            <person name="Sasamoto S."/>
            <person name="Kimura T."/>
            <person name="Hosouchi T."/>
            <person name="Matsuno A."/>
            <person name="Muraki A."/>
            <person name="Nakazaki N."/>
            <person name="Naruo K."/>
            <person name="Okumura S."/>
            <person name="Shimpo S."/>
            <person name="Takeuchi C."/>
            <person name="Wada T."/>
            <person name="Watanabe A."/>
            <person name="Yamada M."/>
            <person name="Yasuda M."/>
            <person name="Tabata S."/>
        </authorList>
    </citation>
    <scope>NUCLEOTIDE SEQUENCE [LARGE SCALE GENOMIC DNA]</scope>
    <source>
        <strain>ATCC 27184 / PCC 6803 / Kazusa</strain>
    </source>
</reference>
<reference key="3">
    <citation type="journal article" date="1998" name="Proc. Natl. Acad. Sci. U.S.A.">
        <title>An SmtB-like repressor from Synechocystis PCC 6803 regulates a zinc exporter.</title>
        <authorList>
            <person name="Thelwell C."/>
            <person name="Robinson N.J."/>
            <person name="Turner-Cavet J.S."/>
        </authorList>
    </citation>
    <scope>CHARACTERIZATION</scope>
    <scope>MUTAGENESIS OF CYS-71; CYS-73 AND HIS-116</scope>
</reference>
<reference key="4">
    <citation type="journal article" date="2003" name="FEMS Microbiol. Rev.">
        <title>The SmtB/ArsR family of metalloregulatory transcriptional repressors: Structural insights into prokaryotic metal resistance.</title>
        <authorList>
            <person name="Busenlehner L.S."/>
            <person name="Pennella M.A."/>
            <person name="Giedroc D.P."/>
        </authorList>
    </citation>
    <scope>REVIEW</scope>
</reference>
<gene>
    <name type="primary">ziaR</name>
    <name type="synonym">smtB</name>
    <name type="ordered locus">sll0792</name>
</gene>
<organism>
    <name type="scientific">Synechocystis sp. (strain ATCC 27184 / PCC 6803 / Kazusa)</name>
    <dbReference type="NCBI Taxonomy" id="1111708"/>
    <lineage>
        <taxon>Bacteria</taxon>
        <taxon>Bacillati</taxon>
        <taxon>Cyanobacteriota</taxon>
        <taxon>Cyanophyceae</taxon>
        <taxon>Synechococcales</taxon>
        <taxon>Merismopediaceae</taxon>
        <taxon>Synechocystis</taxon>
    </lineage>
</organism>
<keyword id="KW-0238">DNA-binding</keyword>
<keyword id="KW-0479">Metal-binding</keyword>
<keyword id="KW-1185">Reference proteome</keyword>
<keyword id="KW-0678">Repressor</keyword>
<keyword id="KW-0804">Transcription</keyword>
<keyword id="KW-0805">Transcription regulation</keyword>
<keyword id="KW-0862">Zinc</keyword>
<comment type="function">
    <text>Transcriptional repressor of the expression of the ziaA gene. Controls zinc homeostasis by triggering ZiaA-mediated efflux of excess zinc into the periplasm.</text>
</comment>
<comment type="subunit">
    <text evidence="1">Homodimer.</text>
</comment>
<dbReference type="EMBL" id="BA000022">
    <property type="protein sequence ID" value="BAA10706.1"/>
    <property type="molecule type" value="Genomic_DNA"/>
</dbReference>
<dbReference type="PIR" id="S77014">
    <property type="entry name" value="S77014"/>
</dbReference>
<dbReference type="SMR" id="Q55940"/>
<dbReference type="FunCoup" id="Q55940">
    <property type="interactions" value="203"/>
</dbReference>
<dbReference type="STRING" id="1148.gene:10500210"/>
<dbReference type="PaxDb" id="1148-1001825"/>
<dbReference type="EnsemblBacteria" id="BAA10706">
    <property type="protein sequence ID" value="BAA10706"/>
    <property type="gene ID" value="BAA10706"/>
</dbReference>
<dbReference type="KEGG" id="syn:sll0792"/>
<dbReference type="eggNOG" id="COG0640">
    <property type="taxonomic scope" value="Bacteria"/>
</dbReference>
<dbReference type="InParanoid" id="Q55940"/>
<dbReference type="PhylomeDB" id="Q55940"/>
<dbReference type="Proteomes" id="UP000001425">
    <property type="component" value="Chromosome"/>
</dbReference>
<dbReference type="GO" id="GO:0003677">
    <property type="term" value="F:DNA binding"/>
    <property type="evidence" value="ECO:0007669"/>
    <property type="project" value="UniProtKB-KW"/>
</dbReference>
<dbReference type="GO" id="GO:0003700">
    <property type="term" value="F:DNA-binding transcription factor activity"/>
    <property type="evidence" value="ECO:0007669"/>
    <property type="project" value="InterPro"/>
</dbReference>
<dbReference type="GO" id="GO:0046872">
    <property type="term" value="F:metal ion binding"/>
    <property type="evidence" value="ECO:0007669"/>
    <property type="project" value="UniProtKB-KW"/>
</dbReference>
<dbReference type="CDD" id="cd00090">
    <property type="entry name" value="HTH_ARSR"/>
    <property type="match status" value="1"/>
</dbReference>
<dbReference type="Gene3D" id="1.10.10.10">
    <property type="entry name" value="Winged helix-like DNA-binding domain superfamily/Winged helix DNA-binding domain"/>
    <property type="match status" value="1"/>
</dbReference>
<dbReference type="InterPro" id="IPR011991">
    <property type="entry name" value="ArsR-like_HTH"/>
</dbReference>
<dbReference type="InterPro" id="IPR018334">
    <property type="entry name" value="ArsR_HTH"/>
</dbReference>
<dbReference type="InterPro" id="IPR001845">
    <property type="entry name" value="HTH_ArsR_DNA-bd_dom"/>
</dbReference>
<dbReference type="InterPro" id="IPR051011">
    <property type="entry name" value="Metal_resp_trans_reg"/>
</dbReference>
<dbReference type="InterPro" id="IPR036388">
    <property type="entry name" value="WH-like_DNA-bd_sf"/>
</dbReference>
<dbReference type="InterPro" id="IPR036390">
    <property type="entry name" value="WH_DNA-bd_sf"/>
</dbReference>
<dbReference type="NCBIfam" id="NF033788">
    <property type="entry name" value="HTH_metalloreg"/>
    <property type="match status" value="1"/>
</dbReference>
<dbReference type="PANTHER" id="PTHR43132">
    <property type="entry name" value="ARSENICAL RESISTANCE OPERON REPRESSOR ARSR-RELATED"/>
    <property type="match status" value="1"/>
</dbReference>
<dbReference type="PANTHER" id="PTHR43132:SF6">
    <property type="entry name" value="HTH-TYPE TRANSCRIPTIONAL REPRESSOR CZRA"/>
    <property type="match status" value="1"/>
</dbReference>
<dbReference type="Pfam" id="PF01022">
    <property type="entry name" value="HTH_5"/>
    <property type="match status" value="1"/>
</dbReference>
<dbReference type="PRINTS" id="PR00778">
    <property type="entry name" value="HTHARSR"/>
</dbReference>
<dbReference type="SMART" id="SM00418">
    <property type="entry name" value="HTH_ARSR"/>
    <property type="match status" value="1"/>
</dbReference>
<dbReference type="SUPFAM" id="SSF46785">
    <property type="entry name" value="Winged helix' DNA-binding domain"/>
    <property type="match status" value="1"/>
</dbReference>
<dbReference type="PROSITE" id="PS00846">
    <property type="entry name" value="HTH_ARSR_1"/>
    <property type="match status" value="1"/>
</dbReference>
<dbReference type="PROSITE" id="PS50987">
    <property type="entry name" value="HTH_ARSR_2"/>
    <property type="match status" value="1"/>
</dbReference>